<comment type="function">
    <text evidence="2">Multitasking protein that has dual roles in promoting cell proliferation and preventing apoptosis (By similarity). Component of a chromosome passage protein complex (CPC) which is essential for chromosome alignment and segregation during mitosis and cytokinesis (By similarity). Acts as an important regulator of the localization of this complex; directs CPC movement to different locations from the inner centromere during prometaphase to midbody during cytokinesis and participates in the organization of the center spindle by associating with polymerized microtubules (By similarity). Involved in the recruitment of CPC to centromeres during early mitosis via association with histone H3 phosphorylated at 'Thr-3' (H3pT3) during mitosis (By similarity). The complex with RAN plays a role in mitotic spindle formation by serving as a physical scaffold to help deliver the RAN effector molecule TPX2 to microtubules (By similarity). May counteract a default induction of apoptosis in G2/M phase (By similarity). The acetylated form represses STAT3 transactivation of target gene promoters (By similarity). May play a role in neoplasia. Inhibitor of CASP3 and CASP7 (By similarity). Essential for the maintenance of mitochondrial integrity and function (By similarity).</text>
</comment>
<comment type="subunit">
    <text evidence="2">Monomer or homodimer. Exists as a homodimer in the apo state and as a monomer in the CPC-bound state. The monomer protects cells against apoptosis more efficiently than the dimer. Only the dimeric form is capable of enhancing tubulin stability in cells. When phosphorylated, interacts with LAMTOR5/HBXIP; the resulting complex binds pro-CASP9, as well as active CASP9, but much less efficiently. Component of the chromosomal passenger complex (CPC) composed of at least BIRC5/survivin, CDCA8/borealin, INCENP, AURKB or AURKC; in the complex forms a triple-helix bundle-based subcomplex with INCENP and CDCA8. Interacts with JTB. Interacts (via BIR domain) with histone H3 phosphorylated at 'Thr-3' (H3pT3). Interacts with EVI5. Interacts with GTP-bound RAN in both the S and M phases of the cell cycle. Interacts with USP9X. Interacts with tubulin. Interacts with BIRC2/c-IAP1. The acetylated form at Lys-129 interacts with STAT3. The monomeric form deacetylated at Lys-129 interacts with XPO1/CRM1. The monomeric form interacts with XIAP/BIRC4. Both the dimeric and monomeric form can interact with DIABLO/SMAC. Interacts with BIRC6/bruce. Interacts with FBXL7; this interaction facilitates the polyubiquitination and subsequent proteasomal degradation of BIRC5 by the SCF(FBXL7) E3 ubiquitin-protein ligase complex (By similarity).</text>
</comment>
<comment type="subcellular location">
    <subcellularLocation>
        <location evidence="2">Cytoplasm</location>
    </subcellularLocation>
    <subcellularLocation>
        <location evidence="2">Nucleus</location>
    </subcellularLocation>
    <subcellularLocation>
        <location evidence="2">Chromosome</location>
    </subcellularLocation>
    <subcellularLocation>
        <location evidence="2">Chromosome</location>
        <location evidence="2">Centromere</location>
    </subcellularLocation>
    <subcellularLocation>
        <location evidence="2">Cytoplasm</location>
        <location evidence="2">Cytoskeleton</location>
        <location evidence="2">Spindle</location>
    </subcellularLocation>
    <subcellularLocation>
        <location evidence="2">Chromosome</location>
        <location evidence="2">Centromere</location>
        <location evidence="2">Kinetochore</location>
    </subcellularLocation>
    <subcellularLocation>
        <location evidence="2">Midbody</location>
    </subcellularLocation>
    <text evidence="1 2">Localizes at the centromeres from prophase to metaphase, at the spindle midzone during anaphase and a the midbody during telophase and cytokinesis. Accumulates in the nucleus upon treatment with leptomycin B (LMB), a XPO1/CRM1 nuclear export inhibitor (By similarity). Localizes on chromosome arms and inner centromeres from prophase through metaphase. Localizes to kinetochores in metaphase, distributes to the midzone microtubules in anaphase and at telophase, localizes exclusively to the midbody. Colocalizes with AURKB at mitotic chromosomes. Acetylation at Lys-129 directs its localization to the nucleus by enhancing homodimerization and thereby inhibiting XPO1/CRM1-mediated nuclear export (By similarity).</text>
</comment>
<comment type="domain">
    <text evidence="2">The BIR repeat is necessary and sufficient for LAMTOR5 binding.</text>
</comment>
<comment type="PTM">
    <text evidence="2">Ubiquitinated by the Cul9-RING ubiquitin-protein ligase complex, leading to its degradation. Ubiquitination is required for centrosomal targeting. Deubiquitinated by USP35 or USP38; leading to stabilization.</text>
</comment>
<comment type="PTM">
    <text evidence="2">Acetylation at Lys-129 results in its homodimerization, while deacetylation promotes the formation of monomers which heterodimerize with XPO1/CRM1 which facilitates its nuclear export. The acetylated form represses STAT3 transactivation. The dynamic equilibrium between its acetylation and deacetylation at Lys-129 determines its interaction with XPO1/CRM1, its subsequent subcellular localization, and its ability to inhibit STAT3 transactivation.</text>
</comment>
<comment type="PTM">
    <text evidence="2">In vitro phosphorylation at Thr-117 by AURKB prevents interaction with INCENP and localization to mitotic chromosomes. Phosphorylation at Thr-48 by CK2 is critical for its mitotic and anti-apoptotic activities. Phosphorylation at Thr-34 by CDK15 is critical for its anti-apoptotic activity. Phosphorylation at Ser-20 by AURKC is critical for regulation of proper chromosome alignment and segregation, and possibly cytokinesis.</text>
</comment>
<comment type="similarity">
    <text evidence="4">Belongs to the IAP family.</text>
</comment>
<keyword id="KW-0007">Acetylation</keyword>
<keyword id="KW-0053">Apoptosis</keyword>
<keyword id="KW-0131">Cell cycle</keyword>
<keyword id="KW-0132">Cell division</keyword>
<keyword id="KW-0137">Centromere</keyword>
<keyword id="KW-0158">Chromosome</keyword>
<keyword id="KW-0159">Chromosome partition</keyword>
<keyword id="KW-0963">Cytoplasm</keyword>
<keyword id="KW-0206">Cytoskeleton</keyword>
<keyword id="KW-0995">Kinetochore</keyword>
<keyword id="KW-0479">Metal-binding</keyword>
<keyword id="KW-0493">Microtubule</keyword>
<keyword id="KW-0498">Mitosis</keyword>
<keyword id="KW-0539">Nucleus</keyword>
<keyword id="KW-0597">Phosphoprotein</keyword>
<keyword id="KW-0646">Protease inhibitor</keyword>
<keyword id="KW-1185">Reference proteome</keyword>
<keyword id="KW-0678">Repressor</keyword>
<keyword id="KW-0789">Thiol protease inhibitor</keyword>
<keyword id="KW-0804">Transcription</keyword>
<keyword id="KW-0805">Transcription regulation</keyword>
<keyword id="KW-0832">Ubl conjugation</keyword>
<keyword id="KW-0862">Zinc</keyword>
<reference key="1">
    <citation type="submission" date="2004-06" db="EMBL/GenBank/DDBJ databases">
        <title>Felis catus mRNA for survivin.</title>
        <authorList>
            <person name="Inoue C."/>
            <person name="Kano R."/>
        </authorList>
    </citation>
    <scope>NUCLEOTIDE SEQUENCE [MRNA]</scope>
</reference>
<organism>
    <name type="scientific">Felis catus</name>
    <name type="common">Cat</name>
    <name type="synonym">Felis silvestris catus</name>
    <dbReference type="NCBI Taxonomy" id="9685"/>
    <lineage>
        <taxon>Eukaryota</taxon>
        <taxon>Metazoa</taxon>
        <taxon>Chordata</taxon>
        <taxon>Craniata</taxon>
        <taxon>Vertebrata</taxon>
        <taxon>Euteleostomi</taxon>
        <taxon>Mammalia</taxon>
        <taxon>Eutheria</taxon>
        <taxon>Laurasiatheria</taxon>
        <taxon>Carnivora</taxon>
        <taxon>Feliformia</taxon>
        <taxon>Felidae</taxon>
        <taxon>Felinae</taxon>
        <taxon>Felis</taxon>
    </lineage>
</organism>
<gene>
    <name type="primary">BIRC5</name>
</gene>
<dbReference type="EMBL" id="AB182320">
    <property type="protein sequence ID" value="BAD23994.1"/>
    <property type="molecule type" value="mRNA"/>
</dbReference>
<dbReference type="RefSeq" id="NP_001009280.1">
    <property type="nucleotide sequence ID" value="NM_001009280.1"/>
</dbReference>
<dbReference type="SMR" id="Q6I6F4"/>
<dbReference type="FunCoup" id="Q6I6F4">
    <property type="interactions" value="52"/>
</dbReference>
<dbReference type="STRING" id="9685.ENSFCAP00000038330"/>
<dbReference type="MEROPS" id="I32.005"/>
<dbReference type="PaxDb" id="9685-ENSFCAP00000016716"/>
<dbReference type="Ensembl" id="ENSFCAT00000042843.2">
    <property type="protein sequence ID" value="ENSFCAP00000038330.1"/>
    <property type="gene ID" value="ENSFCAG00000039377.3"/>
</dbReference>
<dbReference type="GeneID" id="493835"/>
<dbReference type="KEGG" id="fca:493835"/>
<dbReference type="CTD" id="332"/>
<dbReference type="eggNOG" id="KOG1101">
    <property type="taxonomic scope" value="Eukaryota"/>
</dbReference>
<dbReference type="GeneTree" id="ENSGT00510000047537"/>
<dbReference type="HOGENOM" id="CLU_016347_0_1_1"/>
<dbReference type="InParanoid" id="Q6I6F4"/>
<dbReference type="OMA" id="IKMYFYE"/>
<dbReference type="OrthoDB" id="2196114at2759"/>
<dbReference type="TreeFam" id="TF342652"/>
<dbReference type="Proteomes" id="UP000011712">
    <property type="component" value="Chromosome E1"/>
</dbReference>
<dbReference type="GO" id="GO:0005814">
    <property type="term" value="C:centriole"/>
    <property type="evidence" value="ECO:0000250"/>
    <property type="project" value="UniProtKB"/>
</dbReference>
<dbReference type="GO" id="GO:0032133">
    <property type="term" value="C:chromosome passenger complex"/>
    <property type="evidence" value="ECO:0000250"/>
    <property type="project" value="UniProtKB"/>
</dbReference>
<dbReference type="GO" id="GO:0000775">
    <property type="term" value="C:chromosome, centromeric region"/>
    <property type="evidence" value="ECO:0000250"/>
    <property type="project" value="UniProtKB"/>
</dbReference>
<dbReference type="GO" id="GO:0005737">
    <property type="term" value="C:cytoplasm"/>
    <property type="evidence" value="ECO:0000250"/>
    <property type="project" value="UniProtKB"/>
</dbReference>
<dbReference type="GO" id="GO:0005881">
    <property type="term" value="C:cytoplasmic microtubule"/>
    <property type="evidence" value="ECO:0000250"/>
    <property type="project" value="UniProtKB"/>
</dbReference>
<dbReference type="GO" id="GO:0005829">
    <property type="term" value="C:cytosol"/>
    <property type="evidence" value="ECO:0000250"/>
    <property type="project" value="UniProtKB"/>
</dbReference>
<dbReference type="GO" id="GO:0031021">
    <property type="term" value="C:interphase microtubule organizing center"/>
    <property type="evidence" value="ECO:0000250"/>
    <property type="project" value="UniProtKB"/>
</dbReference>
<dbReference type="GO" id="GO:0000776">
    <property type="term" value="C:kinetochore"/>
    <property type="evidence" value="ECO:0000250"/>
    <property type="project" value="UniProtKB"/>
</dbReference>
<dbReference type="GO" id="GO:0030496">
    <property type="term" value="C:midbody"/>
    <property type="evidence" value="ECO:0000250"/>
    <property type="project" value="UniProtKB"/>
</dbReference>
<dbReference type="GO" id="GO:0005634">
    <property type="term" value="C:nucleus"/>
    <property type="evidence" value="ECO:0000250"/>
    <property type="project" value="UniProtKB"/>
</dbReference>
<dbReference type="GO" id="GO:0005876">
    <property type="term" value="C:spindle microtubule"/>
    <property type="evidence" value="ECO:0000250"/>
    <property type="project" value="UniProtKB"/>
</dbReference>
<dbReference type="GO" id="GO:0051233">
    <property type="term" value="C:spindle midzone"/>
    <property type="evidence" value="ECO:0000318"/>
    <property type="project" value="GO_Central"/>
</dbReference>
<dbReference type="GO" id="GO:0004869">
    <property type="term" value="F:cysteine-type endopeptidase inhibitor activity"/>
    <property type="evidence" value="ECO:0007669"/>
    <property type="project" value="UniProtKB-KW"/>
</dbReference>
<dbReference type="GO" id="GO:0043027">
    <property type="term" value="F:cysteine-type endopeptidase inhibitor activity involved in apoptotic process"/>
    <property type="evidence" value="ECO:0000250"/>
    <property type="project" value="UniProtKB"/>
</dbReference>
<dbReference type="GO" id="GO:0008017">
    <property type="term" value="F:microtubule binding"/>
    <property type="evidence" value="ECO:0000250"/>
    <property type="project" value="UniProtKB"/>
</dbReference>
<dbReference type="GO" id="GO:0042803">
    <property type="term" value="F:protein homodimerization activity"/>
    <property type="evidence" value="ECO:0000250"/>
    <property type="project" value="UniProtKB"/>
</dbReference>
<dbReference type="GO" id="GO:0015631">
    <property type="term" value="F:tubulin binding"/>
    <property type="evidence" value="ECO:0000250"/>
    <property type="project" value="UniProtKB"/>
</dbReference>
<dbReference type="GO" id="GO:0008270">
    <property type="term" value="F:zinc ion binding"/>
    <property type="evidence" value="ECO:0000250"/>
    <property type="project" value="UniProtKB"/>
</dbReference>
<dbReference type="GO" id="GO:0006915">
    <property type="term" value="P:apoptotic process"/>
    <property type="evidence" value="ECO:0007669"/>
    <property type="project" value="UniProtKB-KW"/>
</dbReference>
<dbReference type="GO" id="GO:0051301">
    <property type="term" value="P:cell division"/>
    <property type="evidence" value="ECO:0000250"/>
    <property type="project" value="UniProtKB"/>
</dbReference>
<dbReference type="GO" id="GO:0007059">
    <property type="term" value="P:chromosome segregation"/>
    <property type="evidence" value="ECO:0000318"/>
    <property type="project" value="GO_Central"/>
</dbReference>
<dbReference type="GO" id="GO:0051303">
    <property type="term" value="P:establishment of chromosome localization"/>
    <property type="evidence" value="ECO:0000250"/>
    <property type="project" value="UniProtKB"/>
</dbReference>
<dbReference type="GO" id="GO:0000086">
    <property type="term" value="P:G2/M transition of mitotic cell cycle"/>
    <property type="evidence" value="ECO:0000250"/>
    <property type="project" value="UniProtKB"/>
</dbReference>
<dbReference type="GO" id="GO:0000281">
    <property type="term" value="P:mitotic cytokinesis"/>
    <property type="evidence" value="ECO:0000250"/>
    <property type="project" value="UniProtKB"/>
</dbReference>
<dbReference type="GO" id="GO:0007094">
    <property type="term" value="P:mitotic spindle assembly checkpoint signaling"/>
    <property type="evidence" value="ECO:0000250"/>
    <property type="project" value="UniProtKB"/>
</dbReference>
<dbReference type="GO" id="GO:0007052">
    <property type="term" value="P:mitotic spindle organization"/>
    <property type="evidence" value="ECO:0000318"/>
    <property type="project" value="GO_Central"/>
</dbReference>
<dbReference type="GO" id="GO:0043066">
    <property type="term" value="P:negative regulation of apoptotic process"/>
    <property type="evidence" value="ECO:0000250"/>
    <property type="project" value="UniProtKB"/>
</dbReference>
<dbReference type="GO" id="GO:0045892">
    <property type="term" value="P:negative regulation of DNA-templated transcription"/>
    <property type="evidence" value="ECO:0000250"/>
    <property type="project" value="UniProtKB"/>
</dbReference>
<dbReference type="GO" id="GO:0031536">
    <property type="term" value="P:positive regulation of exit from mitosis"/>
    <property type="evidence" value="ECO:0000250"/>
    <property type="project" value="UniProtKB"/>
</dbReference>
<dbReference type="GO" id="GO:0045931">
    <property type="term" value="P:positive regulation of mitotic cell cycle"/>
    <property type="evidence" value="ECO:0000250"/>
    <property type="project" value="UniProtKB"/>
</dbReference>
<dbReference type="GO" id="GO:0031503">
    <property type="term" value="P:protein-containing complex localization"/>
    <property type="evidence" value="ECO:0000250"/>
    <property type="project" value="UniProtKB"/>
</dbReference>
<dbReference type="CDD" id="cd00022">
    <property type="entry name" value="BIR"/>
    <property type="match status" value="1"/>
</dbReference>
<dbReference type="FunFam" id="1.10.1170.10:FF:000009">
    <property type="entry name" value="Baculoviral IAP repeat-containing protein 5"/>
    <property type="match status" value="1"/>
</dbReference>
<dbReference type="Gene3D" id="1.10.1170.10">
    <property type="entry name" value="Inhibitor Of Apoptosis Protein (2mihbC-IAP-1), Chain A"/>
    <property type="match status" value="1"/>
</dbReference>
<dbReference type="InterPro" id="IPR051190">
    <property type="entry name" value="Baculoviral_IAP"/>
</dbReference>
<dbReference type="InterPro" id="IPR001370">
    <property type="entry name" value="BIR_rpt"/>
</dbReference>
<dbReference type="PANTHER" id="PTHR46771:SF3">
    <property type="entry name" value="BACULOVIRAL IAP REPEAT-CONTAINING PROTEIN 5"/>
    <property type="match status" value="1"/>
</dbReference>
<dbReference type="PANTHER" id="PTHR46771">
    <property type="entry name" value="DETERIN"/>
    <property type="match status" value="1"/>
</dbReference>
<dbReference type="Pfam" id="PF00653">
    <property type="entry name" value="BIR"/>
    <property type="match status" value="1"/>
</dbReference>
<dbReference type="SMART" id="SM00238">
    <property type="entry name" value="BIR"/>
    <property type="match status" value="1"/>
</dbReference>
<dbReference type="SUPFAM" id="SSF57924">
    <property type="entry name" value="Inhibitor of apoptosis (IAP) repeat"/>
    <property type="match status" value="1"/>
</dbReference>
<dbReference type="PROSITE" id="PS50143">
    <property type="entry name" value="BIR_REPEAT_2"/>
    <property type="match status" value="1"/>
</dbReference>
<accession>Q6I6F4</accession>
<sequence length="142" mass="16393">MGASSLPPAWQLYLKDHRISTFKNWPFLEGCACTPERMAEAGFIHCPTENEPDLAQCFFCFKELEGWEPDDDPIEEHKKHSSGCAFLSVKKQFEELTLSEFLKLDKERAKNKIAKETNHKQKEFEETAKRVRCAIEQLAALE</sequence>
<protein>
    <recommendedName>
        <fullName>Baculoviral IAP repeat-containing protein 5</fullName>
    </recommendedName>
    <alternativeName>
        <fullName>Apoptosis inhibitor survivin</fullName>
    </alternativeName>
</protein>
<name>BIRC5_FELCA</name>
<proteinExistence type="evidence at transcript level"/>
<feature type="chain" id="PRO_0000226730" description="Baculoviral IAP repeat-containing protein 5">
    <location>
        <begin position="1"/>
        <end position="142"/>
    </location>
</feature>
<feature type="repeat" description="BIR">
    <location>
        <begin position="18"/>
        <end position="88"/>
    </location>
</feature>
<feature type="binding site" evidence="3">
    <location>
        <position position="57"/>
    </location>
    <ligand>
        <name>Zn(2+)</name>
        <dbReference type="ChEBI" id="CHEBI:29105"/>
    </ligand>
</feature>
<feature type="binding site" evidence="3">
    <location>
        <position position="60"/>
    </location>
    <ligand>
        <name>Zn(2+)</name>
        <dbReference type="ChEBI" id="CHEBI:29105"/>
    </ligand>
</feature>
<feature type="binding site" evidence="3">
    <location>
        <position position="77"/>
    </location>
    <ligand>
        <name>Zn(2+)</name>
        <dbReference type="ChEBI" id="CHEBI:29105"/>
    </ligand>
</feature>
<feature type="binding site" evidence="3">
    <location>
        <position position="84"/>
    </location>
    <ligand>
        <name>Zn(2+)</name>
        <dbReference type="ChEBI" id="CHEBI:29105"/>
    </ligand>
</feature>
<feature type="site" description="Interaction with FBXL7" evidence="2">
    <location>
        <position position="126"/>
    </location>
</feature>
<feature type="modified residue" description="Phosphoserine; by AURKC" evidence="2">
    <location>
        <position position="20"/>
    </location>
</feature>
<feature type="modified residue" description="N6-acetyllysine" evidence="2">
    <location>
        <position position="23"/>
    </location>
</feature>
<feature type="modified residue" description="Phosphothreonine; by CDK1 and CDK15" evidence="2">
    <location>
        <position position="34"/>
    </location>
</feature>
<feature type="modified residue" description="Phosphothreonine" evidence="2">
    <location>
        <position position="48"/>
    </location>
</feature>
<feature type="modified residue" description="N6-acetyllysine" evidence="2">
    <location>
        <position position="90"/>
    </location>
</feature>
<feature type="modified residue" description="N6-acetyllysine" evidence="2">
    <location>
        <position position="110"/>
    </location>
</feature>
<feature type="modified residue" description="N6-acetyllysine" evidence="2">
    <location>
        <position position="112"/>
    </location>
</feature>
<feature type="modified residue" description="N6-acetyllysine" evidence="2">
    <location>
        <position position="115"/>
    </location>
</feature>
<feature type="modified residue" description="Phosphothreonine; by AURKB" evidence="2">
    <location>
        <position position="117"/>
    </location>
</feature>
<feature type="modified residue" description="N6-acetyllysine" evidence="2">
    <location>
        <position position="129"/>
    </location>
</feature>
<evidence type="ECO:0000250" key="1">
    <source>
        <dbReference type="UniProtKB" id="E3SCZ8"/>
    </source>
</evidence>
<evidence type="ECO:0000250" key="2">
    <source>
        <dbReference type="UniProtKB" id="O15392"/>
    </source>
</evidence>
<evidence type="ECO:0000255" key="3">
    <source>
        <dbReference type="PROSITE-ProRule" id="PRU00029"/>
    </source>
</evidence>
<evidence type="ECO:0000305" key="4"/>